<accession>A3KMU5</accession>
<sequence length="113" mass="12526">MTKELKVQSSPQALKAGHLPAVKAGGMRVSKKQGNDENSAPEKNAKKTLQEKPSSVLNMTKMQAMNILAGELEKLSHDFPGEAAQIAHQKPRPTVEKIIMPKRLYLIQQPRRC</sequence>
<protein>
    <recommendedName>
        <fullName>Death-associated protein-like 1.S</fullName>
    </recommendedName>
</protein>
<organism>
    <name type="scientific">Xenopus laevis</name>
    <name type="common">African clawed frog</name>
    <dbReference type="NCBI Taxonomy" id="8355"/>
    <lineage>
        <taxon>Eukaryota</taxon>
        <taxon>Metazoa</taxon>
        <taxon>Chordata</taxon>
        <taxon>Craniata</taxon>
        <taxon>Vertebrata</taxon>
        <taxon>Euteleostomi</taxon>
        <taxon>Amphibia</taxon>
        <taxon>Batrachia</taxon>
        <taxon>Anura</taxon>
        <taxon>Pipoidea</taxon>
        <taxon>Pipidae</taxon>
        <taxon>Xenopodinae</taxon>
        <taxon>Xenopus</taxon>
        <taxon>Xenopus</taxon>
    </lineage>
</organism>
<gene>
    <name type="primary">dapl1.S</name>
</gene>
<dbReference type="EMBL" id="CM004483">
    <property type="status" value="NOT_ANNOTATED_CDS"/>
    <property type="molecule type" value="Genomic_DNA"/>
</dbReference>
<dbReference type="EMBL" id="BC133256">
    <property type="protein sequence ID" value="AAI33257.1"/>
    <property type="molecule type" value="mRNA"/>
</dbReference>
<dbReference type="RefSeq" id="NP_001091407.1">
    <property type="nucleotide sequence ID" value="NM_001097938.1"/>
</dbReference>
<dbReference type="PDB" id="7OYC">
    <property type="method" value="EM"/>
    <property type="resolution" value="2.40 A"/>
    <property type="chains" value="s1=1-113"/>
</dbReference>
<dbReference type="PDBsum" id="7OYC"/>
<dbReference type="EMDB" id="EMD-13113"/>
<dbReference type="SMR" id="A3KMU5"/>
<dbReference type="BioGRID" id="674545">
    <property type="interactions" value="1"/>
</dbReference>
<dbReference type="IntAct" id="A3KMU5">
    <property type="interactions" value="1"/>
</dbReference>
<dbReference type="DNASU" id="100049096"/>
<dbReference type="GeneID" id="100049096"/>
<dbReference type="KEGG" id="xla:100049096"/>
<dbReference type="AGR" id="Xenbase:XB-GENE-6255499"/>
<dbReference type="CTD" id="100049096"/>
<dbReference type="Xenbase" id="XB-GENE-6255499">
    <property type="gene designation" value="dapl1.S"/>
</dbReference>
<dbReference type="OMA" id="HKINAAA"/>
<dbReference type="OrthoDB" id="9934354at2759"/>
<dbReference type="Proteomes" id="UP000186698">
    <property type="component" value="Chromosome 9_10S"/>
</dbReference>
<dbReference type="Proteomes" id="UP000694892">
    <property type="component" value="Chromosome 9_10S"/>
</dbReference>
<dbReference type="Bgee" id="100049096">
    <property type="expression patterns" value="Expressed in egg cell and 19 other cell types or tissues"/>
</dbReference>
<dbReference type="GO" id="GO:0070513">
    <property type="term" value="F:death domain binding"/>
    <property type="evidence" value="ECO:0007669"/>
    <property type="project" value="TreeGrafter"/>
</dbReference>
<dbReference type="GO" id="GO:0043022">
    <property type="term" value="F:ribosome binding"/>
    <property type="evidence" value="ECO:0000314"/>
    <property type="project" value="UniProtKB"/>
</dbReference>
<dbReference type="GO" id="GO:0031369">
    <property type="term" value="F:translation initiation factor binding"/>
    <property type="evidence" value="ECO:0000353"/>
    <property type="project" value="UniProtKB"/>
</dbReference>
<dbReference type="GO" id="GO:0030371">
    <property type="term" value="F:translation repressor activity"/>
    <property type="evidence" value="ECO:0000314"/>
    <property type="project" value="UniProtKB"/>
</dbReference>
<dbReference type="GO" id="GO:0097190">
    <property type="term" value="P:apoptotic signaling pathway"/>
    <property type="evidence" value="ECO:0007669"/>
    <property type="project" value="TreeGrafter"/>
</dbReference>
<dbReference type="GO" id="GO:0034198">
    <property type="term" value="P:cellular response to amino acid starvation"/>
    <property type="evidence" value="ECO:0007669"/>
    <property type="project" value="TreeGrafter"/>
</dbReference>
<dbReference type="GO" id="GO:0010507">
    <property type="term" value="P:negative regulation of autophagy"/>
    <property type="evidence" value="ECO:0007669"/>
    <property type="project" value="TreeGrafter"/>
</dbReference>
<dbReference type="GO" id="GO:0141014">
    <property type="term" value="P:ribosome hibernation"/>
    <property type="evidence" value="ECO:0000314"/>
    <property type="project" value="UniProtKB"/>
</dbReference>
<dbReference type="InterPro" id="IPR024130">
    <property type="entry name" value="DAP1/DAPL1"/>
</dbReference>
<dbReference type="PANTHER" id="PTHR13177">
    <property type="entry name" value="DEATH-ASSOCIATED PROTEIN 1"/>
    <property type="match status" value="1"/>
</dbReference>
<dbReference type="PANTHER" id="PTHR13177:SF2">
    <property type="entry name" value="DEATH-ASSOCIATED PROTEIN-LIKE 1"/>
    <property type="match status" value="1"/>
</dbReference>
<dbReference type="Pfam" id="PF15228">
    <property type="entry name" value="DAP"/>
    <property type="match status" value="1"/>
</dbReference>
<proteinExistence type="evidence at protein level"/>
<feature type="chain" id="PRO_0000316838" description="Death-associated protein-like 1.S">
    <location>
        <begin position="1"/>
        <end position="113"/>
    </location>
</feature>
<feature type="region of interest" description="Disordered" evidence="1">
    <location>
        <begin position="1"/>
        <end position="53"/>
    </location>
</feature>
<name>DAL1S_XENLA</name>
<evidence type="ECO:0000256" key="1">
    <source>
        <dbReference type="SAM" id="MobiDB-lite"/>
    </source>
</evidence>
<evidence type="ECO:0000269" key="2">
    <source>
    </source>
</evidence>
<evidence type="ECO:0000305" key="3"/>
<evidence type="ECO:0000312" key="4">
    <source>
        <dbReference type="PDB" id="7OYC"/>
    </source>
</evidence>
<keyword id="KW-0002">3D-structure</keyword>
<keyword id="KW-1185">Reference proteome</keyword>
<keyword id="KW-0810">Translation regulation</keyword>
<reference key="1">
    <citation type="journal article" date="2013" name="Nature">
        <title>The zebrafish reference genome sequence and its relationship to the human genome.</title>
        <authorList>
            <person name="Howe K."/>
            <person name="Clark M.D."/>
            <person name="Torroja C.F."/>
            <person name="Torrance J."/>
            <person name="Berthelot C."/>
            <person name="Muffato M."/>
            <person name="Collins J.E."/>
            <person name="Humphray S."/>
            <person name="McLaren K."/>
            <person name="Matthews L."/>
            <person name="McLaren S."/>
            <person name="Sealy I."/>
            <person name="Caccamo M."/>
            <person name="Churcher C."/>
            <person name="Scott C."/>
            <person name="Barrett J.C."/>
            <person name="Koch R."/>
            <person name="Rauch G.J."/>
            <person name="White S."/>
            <person name="Chow W."/>
            <person name="Kilian B."/>
            <person name="Quintais L.T."/>
            <person name="Guerra-Assuncao J.A."/>
            <person name="Zhou Y."/>
            <person name="Gu Y."/>
            <person name="Yen J."/>
            <person name="Vogel J.H."/>
            <person name="Eyre T."/>
            <person name="Redmond S."/>
            <person name="Banerjee R."/>
            <person name="Chi J."/>
            <person name="Fu B."/>
            <person name="Langley E."/>
            <person name="Maguire S.F."/>
            <person name="Laird G.K."/>
            <person name="Lloyd D."/>
            <person name="Kenyon E."/>
            <person name="Donaldson S."/>
            <person name="Sehra H."/>
            <person name="Almeida-King J."/>
            <person name="Loveland J."/>
            <person name="Trevanion S."/>
            <person name="Jones M."/>
            <person name="Quail M."/>
            <person name="Willey D."/>
            <person name="Hunt A."/>
            <person name="Burton J."/>
            <person name="Sims S."/>
            <person name="McLay K."/>
            <person name="Plumb B."/>
            <person name="Davis J."/>
            <person name="Clee C."/>
            <person name="Oliver K."/>
            <person name="Clark R."/>
            <person name="Riddle C."/>
            <person name="Elliot D."/>
            <person name="Threadgold G."/>
            <person name="Harden G."/>
            <person name="Ware D."/>
            <person name="Begum S."/>
            <person name="Mortimore B."/>
            <person name="Kerry G."/>
            <person name="Heath P."/>
            <person name="Phillimore B."/>
            <person name="Tracey A."/>
            <person name="Corby N."/>
            <person name="Dunn M."/>
            <person name="Johnson C."/>
            <person name="Wood J."/>
            <person name="Clark S."/>
            <person name="Pelan S."/>
            <person name="Griffiths G."/>
            <person name="Smith M."/>
            <person name="Glithero R."/>
            <person name="Howden P."/>
            <person name="Barker N."/>
            <person name="Lloyd C."/>
            <person name="Stevens C."/>
            <person name="Harley J."/>
            <person name="Holt K."/>
            <person name="Panagiotidis G."/>
            <person name="Lovell J."/>
            <person name="Beasley H."/>
            <person name="Henderson C."/>
            <person name="Gordon D."/>
            <person name="Auger K."/>
            <person name="Wright D."/>
            <person name="Collins J."/>
            <person name="Raisen C."/>
            <person name="Dyer L."/>
            <person name="Leung K."/>
            <person name="Robertson L."/>
            <person name="Ambridge K."/>
            <person name="Leongamornlert D."/>
            <person name="McGuire S."/>
            <person name="Gilderthorp R."/>
            <person name="Griffiths C."/>
            <person name="Manthravadi D."/>
            <person name="Nichol S."/>
            <person name="Barker G."/>
            <person name="Whitehead S."/>
            <person name="Kay M."/>
            <person name="Brown J."/>
            <person name="Murnane C."/>
            <person name="Gray E."/>
            <person name="Humphries M."/>
            <person name="Sycamore N."/>
            <person name="Barker D."/>
            <person name="Saunders D."/>
            <person name="Wallis J."/>
            <person name="Babbage A."/>
            <person name="Hammond S."/>
            <person name="Mashreghi-Mohammadi M."/>
            <person name="Barr L."/>
            <person name="Martin S."/>
            <person name="Wray P."/>
            <person name="Ellington A."/>
            <person name="Matthews N."/>
            <person name="Ellwood M."/>
            <person name="Woodmansey R."/>
            <person name="Clark G."/>
            <person name="Cooper J."/>
            <person name="Tromans A."/>
            <person name="Grafham D."/>
            <person name="Skuce C."/>
            <person name="Pandian R."/>
            <person name="Andrews R."/>
            <person name="Harrison E."/>
            <person name="Kimberley A."/>
            <person name="Garnett J."/>
            <person name="Fosker N."/>
            <person name="Hall R."/>
            <person name="Garner P."/>
            <person name="Kelly D."/>
            <person name="Bird C."/>
            <person name="Palmer S."/>
            <person name="Gehring I."/>
            <person name="Berger A."/>
            <person name="Dooley C.M."/>
            <person name="Ersan-Urun Z."/>
            <person name="Eser C."/>
            <person name="Geiger H."/>
            <person name="Geisler M."/>
            <person name="Karotki L."/>
            <person name="Kirn A."/>
            <person name="Konantz J."/>
            <person name="Konantz M."/>
            <person name="Oberlander M."/>
            <person name="Rudolph-Geiger S."/>
            <person name="Teucke M."/>
            <person name="Lanz C."/>
            <person name="Raddatz G."/>
            <person name="Osoegawa K."/>
            <person name="Zhu B."/>
            <person name="Rapp A."/>
            <person name="Widaa S."/>
            <person name="Langford C."/>
            <person name="Yang F."/>
            <person name="Schuster S.C."/>
            <person name="Carter N.P."/>
            <person name="Harrow J."/>
            <person name="Ning Z."/>
            <person name="Herrero J."/>
            <person name="Searle S.M."/>
            <person name="Enright A."/>
            <person name="Geisler R."/>
            <person name="Plasterk R.H."/>
            <person name="Lee C."/>
            <person name="Westerfield M."/>
            <person name="de Jong P.J."/>
            <person name="Zon L.I."/>
            <person name="Postlethwait J.H."/>
            <person name="Nusslein-Volhard C."/>
            <person name="Hubbard T.J."/>
            <person name="Roest Crollius H."/>
            <person name="Rogers J."/>
            <person name="Stemple D.L."/>
        </authorList>
    </citation>
    <scope>NUCLEOTIDE SEQUENCE [LARGE SCALE GENOMIC DNA]</scope>
    <source>
        <strain>Tuebingen</strain>
    </source>
</reference>
<reference key="2">
    <citation type="submission" date="2007-02" db="EMBL/GenBank/DDBJ databases">
        <authorList>
            <consortium name="NIH - Xenopus Gene Collection (XGC) project"/>
        </authorList>
    </citation>
    <scope>NUCLEOTIDE SEQUENCE [LARGE SCALE MRNA]</scope>
</reference>
<reference evidence="4" key="3">
    <citation type="journal article" date="2023" name="Nature">
        <title>A molecular network of conserved factors keeps ribosomes dormant in the egg.</title>
        <authorList>
            <person name="Leesch F."/>
            <person name="Lorenzo-Orts L."/>
            <person name="Pribitzer C."/>
            <person name="Grishkovskaya I."/>
            <person name="Roehsner J."/>
            <person name="Chugunova A."/>
            <person name="Matzinger M."/>
            <person name="Roitinger E."/>
            <person name="Belacic K."/>
            <person name="Kandolf S."/>
            <person name="Lin T.Y."/>
            <person name="Mechtler K."/>
            <person name="Meinhart A."/>
            <person name="Haselbach D."/>
            <person name="Pauli A."/>
        </authorList>
    </citation>
    <scope>STRUCTURE BY ELECTRON MICROSCOPY (3.20 ANGSTROMS) IN COMPLEX WITH EIF5A AND RIBOSOME</scope>
    <scope>FUNCTION</scope>
    <scope>INTERACTION WITH EIF5A</scope>
    <scope>RIBOSOME-BINDING</scope>
</reference>
<comment type="function">
    <text evidence="2">Ribosome-binding protein that promotes ribosome hibernation, a process during which ribosomes are stabilized in an inactive state and preserved from proteasomal degradation (PubMed:36653451). Acts via its association with eiF5a (eif5a and eif5a2) at the polypeptide exit tunnel of the ribosome, preventing mRNA translation (PubMed:36653451). Plays a key role in ribosome hibernation in the mature egg by preventing mRNA translation, leading to ribosome inactivation (PubMed:36653451). Ribosomes, which are produced in large quantities during oogenesis, are stored and translationally repressed in the egg and early embryo (PubMed:36653451).</text>
</comment>
<comment type="subunit">
    <text evidence="2">Associates with ribosomes; preventing translation (PubMed:36653451). Interacts with eiF5a (eif5a and eif5a2); preventing translation (PubMed:36653451).</text>
</comment>
<comment type="similarity">
    <text evidence="3">Belongs to the DAP-DAPL1 family.</text>
</comment>